<gene>
    <name evidence="1" type="primary">rpmH</name>
    <name type="ordered locus">Rleg2_0082</name>
</gene>
<accession>B5ZN44</accession>
<evidence type="ECO:0000255" key="1">
    <source>
        <dbReference type="HAMAP-Rule" id="MF_00391"/>
    </source>
</evidence>
<evidence type="ECO:0000256" key="2">
    <source>
        <dbReference type="SAM" id="MobiDB-lite"/>
    </source>
</evidence>
<evidence type="ECO:0000305" key="3"/>
<keyword id="KW-1185">Reference proteome</keyword>
<keyword id="KW-0687">Ribonucleoprotein</keyword>
<keyword id="KW-0689">Ribosomal protein</keyword>
<proteinExistence type="inferred from homology"/>
<name>RL34_RHILW</name>
<feature type="chain" id="PRO_1000196093" description="Large ribosomal subunit protein bL34">
    <location>
        <begin position="1"/>
        <end position="44"/>
    </location>
</feature>
<feature type="region of interest" description="Disordered" evidence="2">
    <location>
        <begin position="1"/>
        <end position="44"/>
    </location>
</feature>
<feature type="compositionally biased region" description="Basic residues" evidence="2">
    <location>
        <begin position="10"/>
        <end position="19"/>
    </location>
</feature>
<feature type="compositionally biased region" description="Basic residues" evidence="2">
    <location>
        <begin position="26"/>
        <end position="44"/>
    </location>
</feature>
<sequence length="44" mass="5139">MKRTYQPSKLVRKRRHGFRARMSTKGGRKVIAGRRAQGRKRLSA</sequence>
<comment type="similarity">
    <text evidence="1">Belongs to the bacterial ribosomal protein bL34 family.</text>
</comment>
<protein>
    <recommendedName>
        <fullName evidence="1">Large ribosomal subunit protein bL34</fullName>
    </recommendedName>
    <alternativeName>
        <fullName evidence="3">50S ribosomal protein L34</fullName>
    </alternativeName>
</protein>
<organism>
    <name type="scientific">Rhizobium leguminosarum bv. trifolii (strain WSM2304)</name>
    <dbReference type="NCBI Taxonomy" id="395492"/>
    <lineage>
        <taxon>Bacteria</taxon>
        <taxon>Pseudomonadati</taxon>
        <taxon>Pseudomonadota</taxon>
        <taxon>Alphaproteobacteria</taxon>
        <taxon>Hyphomicrobiales</taxon>
        <taxon>Rhizobiaceae</taxon>
        <taxon>Rhizobium/Agrobacterium group</taxon>
        <taxon>Rhizobium</taxon>
    </lineage>
</organism>
<reference key="1">
    <citation type="journal article" date="2010" name="Stand. Genomic Sci.">
        <title>Complete genome sequence of Rhizobium leguminosarum bv trifolii strain WSM2304, an effective microsymbiont of the South American clover Trifolium polymorphum.</title>
        <authorList>
            <person name="Reeve W."/>
            <person name="O'Hara G."/>
            <person name="Chain P."/>
            <person name="Ardley J."/>
            <person name="Brau L."/>
            <person name="Nandesena K."/>
            <person name="Tiwari R."/>
            <person name="Malfatti S."/>
            <person name="Kiss H."/>
            <person name="Lapidus A."/>
            <person name="Copeland A."/>
            <person name="Nolan M."/>
            <person name="Land M."/>
            <person name="Ivanova N."/>
            <person name="Mavromatis K."/>
            <person name="Markowitz V."/>
            <person name="Kyrpides N."/>
            <person name="Melino V."/>
            <person name="Denton M."/>
            <person name="Yates R."/>
            <person name="Howieson J."/>
        </authorList>
    </citation>
    <scope>NUCLEOTIDE SEQUENCE [LARGE SCALE GENOMIC DNA]</scope>
    <source>
        <strain>WSM2304</strain>
    </source>
</reference>
<dbReference type="EMBL" id="CP001191">
    <property type="protein sequence ID" value="ACI53385.1"/>
    <property type="molecule type" value="Genomic_DNA"/>
</dbReference>
<dbReference type="RefSeq" id="WP_003570740.1">
    <property type="nucleotide sequence ID" value="NC_011369.1"/>
</dbReference>
<dbReference type="SMR" id="B5ZN44"/>
<dbReference type="STRING" id="395492.Rleg2_0082"/>
<dbReference type="KEGG" id="rlt:Rleg2_0082"/>
<dbReference type="eggNOG" id="COG0230">
    <property type="taxonomic scope" value="Bacteria"/>
</dbReference>
<dbReference type="HOGENOM" id="CLU_129938_2_0_5"/>
<dbReference type="Proteomes" id="UP000008330">
    <property type="component" value="Chromosome"/>
</dbReference>
<dbReference type="GO" id="GO:1990904">
    <property type="term" value="C:ribonucleoprotein complex"/>
    <property type="evidence" value="ECO:0007669"/>
    <property type="project" value="UniProtKB-KW"/>
</dbReference>
<dbReference type="GO" id="GO:0005840">
    <property type="term" value="C:ribosome"/>
    <property type="evidence" value="ECO:0007669"/>
    <property type="project" value="UniProtKB-KW"/>
</dbReference>
<dbReference type="GO" id="GO:0003735">
    <property type="term" value="F:structural constituent of ribosome"/>
    <property type="evidence" value="ECO:0007669"/>
    <property type="project" value="InterPro"/>
</dbReference>
<dbReference type="GO" id="GO:0006412">
    <property type="term" value="P:translation"/>
    <property type="evidence" value="ECO:0007669"/>
    <property type="project" value="UniProtKB-UniRule"/>
</dbReference>
<dbReference type="FunFam" id="1.10.287.3980:FF:000001">
    <property type="entry name" value="Mitochondrial ribosomal protein L34"/>
    <property type="match status" value="1"/>
</dbReference>
<dbReference type="Gene3D" id="1.10.287.3980">
    <property type="match status" value="1"/>
</dbReference>
<dbReference type="HAMAP" id="MF_00391">
    <property type="entry name" value="Ribosomal_bL34"/>
    <property type="match status" value="1"/>
</dbReference>
<dbReference type="InterPro" id="IPR000271">
    <property type="entry name" value="Ribosomal_bL34"/>
</dbReference>
<dbReference type="InterPro" id="IPR020939">
    <property type="entry name" value="Ribosomal_bL34_CS"/>
</dbReference>
<dbReference type="NCBIfam" id="TIGR01030">
    <property type="entry name" value="rpmH_bact"/>
    <property type="match status" value="1"/>
</dbReference>
<dbReference type="PANTHER" id="PTHR14503:SF4">
    <property type="entry name" value="LARGE RIBOSOMAL SUBUNIT PROTEIN BL34M"/>
    <property type="match status" value="1"/>
</dbReference>
<dbReference type="PANTHER" id="PTHR14503">
    <property type="entry name" value="MITOCHONDRIAL RIBOSOMAL PROTEIN 34 FAMILY MEMBER"/>
    <property type="match status" value="1"/>
</dbReference>
<dbReference type="Pfam" id="PF00468">
    <property type="entry name" value="Ribosomal_L34"/>
    <property type="match status" value="1"/>
</dbReference>
<dbReference type="PROSITE" id="PS00784">
    <property type="entry name" value="RIBOSOMAL_L34"/>
    <property type="match status" value="1"/>
</dbReference>